<dbReference type="EMBL" id="AL935263">
    <property type="protein sequence ID" value="CCC79265.1"/>
    <property type="molecule type" value="Genomic_DNA"/>
</dbReference>
<dbReference type="RefSeq" id="YP_004889779.1">
    <property type="nucleotide sequence ID" value="NC_004567.2"/>
</dbReference>
<dbReference type="PDB" id="7R49">
    <property type="method" value="X-ray"/>
    <property type="resolution" value="1.88 A"/>
    <property type="chains" value="E/F/H=1-80"/>
</dbReference>
<dbReference type="PDBsum" id="7R49"/>
<dbReference type="SMR" id="Q88VM8"/>
<dbReference type="STRING" id="220668.lp_2017"/>
<dbReference type="EnsemblBacteria" id="CCC79265">
    <property type="protein sequence ID" value="CCC79265"/>
    <property type="gene ID" value="lp_2017"/>
</dbReference>
<dbReference type="KEGG" id="lpl:lp_2017"/>
<dbReference type="PATRIC" id="fig|220668.9.peg.1704"/>
<dbReference type="eggNOG" id="COG0236">
    <property type="taxonomic scope" value="Bacteria"/>
</dbReference>
<dbReference type="HOGENOM" id="CLU_108696_19_0_9"/>
<dbReference type="OrthoDB" id="6462171at2"/>
<dbReference type="PhylomeDB" id="Q88VM8"/>
<dbReference type="UniPathway" id="UPA00556"/>
<dbReference type="Proteomes" id="UP000000432">
    <property type="component" value="Chromosome"/>
</dbReference>
<dbReference type="GO" id="GO:0005737">
    <property type="term" value="C:cytoplasm"/>
    <property type="evidence" value="ECO:0007669"/>
    <property type="project" value="UniProtKB-SubCell"/>
</dbReference>
<dbReference type="GO" id="GO:0036370">
    <property type="term" value="F:D-alanyl carrier activity"/>
    <property type="evidence" value="ECO:0007669"/>
    <property type="project" value="UniProtKB-UniRule"/>
</dbReference>
<dbReference type="GO" id="GO:0071555">
    <property type="term" value="P:cell wall organization"/>
    <property type="evidence" value="ECO:0007669"/>
    <property type="project" value="UniProtKB-KW"/>
</dbReference>
<dbReference type="GO" id="GO:0070395">
    <property type="term" value="P:lipoteichoic acid biosynthetic process"/>
    <property type="evidence" value="ECO:0007669"/>
    <property type="project" value="UniProtKB-UniRule"/>
</dbReference>
<dbReference type="Gene3D" id="1.10.1200.10">
    <property type="entry name" value="ACP-like"/>
    <property type="match status" value="1"/>
</dbReference>
<dbReference type="HAMAP" id="MF_00565">
    <property type="entry name" value="DltC"/>
    <property type="match status" value="1"/>
</dbReference>
<dbReference type="InterPro" id="IPR036736">
    <property type="entry name" value="ACP-like_sf"/>
</dbReference>
<dbReference type="InterPro" id="IPR003230">
    <property type="entry name" value="DltC"/>
</dbReference>
<dbReference type="InterPro" id="IPR009081">
    <property type="entry name" value="PP-bd_ACP"/>
</dbReference>
<dbReference type="NCBIfam" id="TIGR01688">
    <property type="entry name" value="dltC"/>
    <property type="match status" value="1"/>
</dbReference>
<dbReference type="NCBIfam" id="NF003464">
    <property type="entry name" value="PRK05087.1"/>
    <property type="match status" value="1"/>
</dbReference>
<dbReference type="Pfam" id="PF00550">
    <property type="entry name" value="PP-binding"/>
    <property type="match status" value="1"/>
</dbReference>
<dbReference type="SUPFAM" id="SSF47336">
    <property type="entry name" value="ACP-like"/>
    <property type="match status" value="1"/>
</dbReference>
<dbReference type="PROSITE" id="PS50075">
    <property type="entry name" value="CARRIER"/>
    <property type="match status" value="1"/>
</dbReference>
<proteinExistence type="evidence at protein level"/>
<protein>
    <recommendedName>
        <fullName evidence="1">D-alanyl carrier protein 1</fullName>
        <shortName evidence="1">DCP 1</shortName>
    </recommendedName>
    <alternativeName>
        <fullName evidence="1">D-alanine--poly(phosphoribitol) ligase subunit 2-1</fullName>
    </alternativeName>
</protein>
<organism>
    <name type="scientific">Lactiplantibacillus plantarum (strain ATCC BAA-793 / NCIMB 8826 / WCFS1)</name>
    <name type="common">Lactobacillus plantarum</name>
    <dbReference type="NCBI Taxonomy" id="220668"/>
    <lineage>
        <taxon>Bacteria</taxon>
        <taxon>Bacillati</taxon>
        <taxon>Bacillota</taxon>
        <taxon>Bacilli</taxon>
        <taxon>Lactobacillales</taxon>
        <taxon>Lactobacillaceae</taxon>
        <taxon>Lactiplantibacillus</taxon>
    </lineage>
</organism>
<comment type="function">
    <text evidence="1">Carrier protein involved in the D-alanylation of lipoteichoic acid (LTA). The loading of thioester-linked D-alanine onto DltC is catalyzed by D-alanine--D-alanyl carrier protein ligase DltA. The DltC-carried D-alanyl group is further transferred to cell membrane phosphatidylglycerol (PG) by forming an ester bond, probably catalyzed by DltD. D-alanylation of LTA plays an important role in modulating the properties of the cell wall in Gram-positive bacteria, influencing the net charge of the cell wall.</text>
</comment>
<comment type="pathway">
    <text evidence="1">Cell wall biogenesis; lipoteichoic acid biosynthesis.</text>
</comment>
<comment type="subcellular location">
    <subcellularLocation>
        <location evidence="1">Cytoplasm</location>
    </subcellularLocation>
</comment>
<comment type="PTM">
    <text evidence="1">4'-phosphopantetheine is transferred from CoA to a specific serine of apo-DCP.</text>
</comment>
<comment type="similarity">
    <text evidence="1">Belongs to the DltC family.</text>
</comment>
<gene>
    <name evidence="1" type="primary">dltC1</name>
    <name type="ordered locus">lp_2017</name>
</gene>
<feature type="chain" id="PRO_0000213091" description="D-alanyl carrier protein 1">
    <location>
        <begin position="1"/>
        <end position="80"/>
    </location>
</feature>
<feature type="domain" description="Carrier" evidence="1">
    <location>
        <begin position="1"/>
        <end position="80"/>
    </location>
</feature>
<feature type="modified residue" description="O-(pantetheine 4'-phosphoryl)serine" evidence="1">
    <location>
        <position position="38"/>
    </location>
</feature>
<feature type="helix" evidence="2">
    <location>
        <begin position="5"/>
        <end position="18"/>
    </location>
</feature>
<feature type="turn" evidence="2">
    <location>
        <begin position="30"/>
        <end position="34"/>
    </location>
</feature>
<feature type="helix" evidence="2">
    <location>
        <begin position="38"/>
        <end position="52"/>
    </location>
</feature>
<feature type="helix" evidence="2">
    <location>
        <begin position="58"/>
        <end position="60"/>
    </location>
</feature>
<feature type="helix" evidence="2">
    <location>
        <begin position="63"/>
        <end position="65"/>
    </location>
</feature>
<feature type="strand" evidence="2">
    <location>
        <begin position="66"/>
        <end position="68"/>
    </location>
</feature>
<feature type="helix" evidence="2">
    <location>
        <begin position="69"/>
        <end position="79"/>
    </location>
</feature>
<evidence type="ECO:0000255" key="1">
    <source>
        <dbReference type="HAMAP-Rule" id="MF_00565"/>
    </source>
</evidence>
<evidence type="ECO:0007829" key="2">
    <source>
        <dbReference type="PDB" id="7R49"/>
    </source>
</evidence>
<name>DLTC1_LACPL</name>
<keyword id="KW-0002">3D-structure</keyword>
<keyword id="KW-0961">Cell wall biogenesis/degradation</keyword>
<keyword id="KW-0963">Cytoplasm</keyword>
<keyword id="KW-0596">Phosphopantetheine</keyword>
<keyword id="KW-0597">Phosphoprotein</keyword>
<keyword id="KW-1185">Reference proteome</keyword>
<reference key="1">
    <citation type="journal article" date="2003" name="Proc. Natl. Acad. Sci. U.S.A.">
        <title>Complete genome sequence of Lactobacillus plantarum WCFS1.</title>
        <authorList>
            <person name="Kleerebezem M."/>
            <person name="Boekhorst J."/>
            <person name="van Kranenburg R."/>
            <person name="Molenaar D."/>
            <person name="Kuipers O.P."/>
            <person name="Leer R."/>
            <person name="Tarchini R."/>
            <person name="Peters S.A."/>
            <person name="Sandbrink H.M."/>
            <person name="Fiers M.W.E.J."/>
            <person name="Stiekema W."/>
            <person name="Klein Lankhorst R.M."/>
            <person name="Bron P.A."/>
            <person name="Hoffer S.M."/>
            <person name="Nierop Groot M.N."/>
            <person name="Kerkhoven R."/>
            <person name="De Vries M."/>
            <person name="Ursing B."/>
            <person name="De Vos W.M."/>
            <person name="Siezen R.J."/>
        </authorList>
    </citation>
    <scope>NUCLEOTIDE SEQUENCE [LARGE SCALE GENOMIC DNA]</scope>
    <source>
        <strain>ATCC BAA-793 / NCIMB 8826 / WCFS1</strain>
    </source>
</reference>
<reference key="2">
    <citation type="journal article" date="2012" name="J. Bacteriol.">
        <title>Complete resequencing and reannotation of the Lactobacillus plantarum WCFS1 genome.</title>
        <authorList>
            <person name="Siezen R.J."/>
            <person name="Francke C."/>
            <person name="Renckens B."/>
            <person name="Boekhorst J."/>
            <person name="Wels M."/>
            <person name="Kleerebezem M."/>
            <person name="van Hijum S.A."/>
        </authorList>
    </citation>
    <scope>NUCLEOTIDE SEQUENCE [LARGE SCALE GENOMIC DNA]</scope>
    <scope>GENOME REANNOTATION</scope>
    <source>
        <strain>ATCC BAA-793 / NCIMB 8826 / WCFS1</strain>
    </source>
</reference>
<sequence length="80" mass="8798">MTMDDTKATVLSILADLTGEDVSSNMDVNLFDEGILDSMGSVQLLLELQNQLGIEVPVSEFQRSEWDTPAKIVAKVENLQ</sequence>
<accession>Q88VM8</accession>
<accession>F9UPX6</accession>